<evidence type="ECO:0000255" key="1">
    <source>
        <dbReference type="HAMAP-Rule" id="MF_00173"/>
    </source>
</evidence>
<comment type="function">
    <text evidence="1">Regulates arginine biosynthesis genes.</text>
</comment>
<comment type="pathway">
    <text>Amino-acid biosynthesis; L-arginine biosynthesis [regulation].</text>
</comment>
<comment type="subcellular location">
    <subcellularLocation>
        <location evidence="1">Cytoplasm</location>
    </subcellularLocation>
</comment>
<comment type="similarity">
    <text evidence="1">Belongs to the ArgR family.</text>
</comment>
<accession>Q254Q1</accession>
<organism>
    <name type="scientific">Chlamydia felis (strain Fe/C-56)</name>
    <name type="common">Chlamydophila felis</name>
    <dbReference type="NCBI Taxonomy" id="264202"/>
    <lineage>
        <taxon>Bacteria</taxon>
        <taxon>Pseudomonadati</taxon>
        <taxon>Chlamydiota</taxon>
        <taxon>Chlamydiia</taxon>
        <taxon>Chlamydiales</taxon>
        <taxon>Chlamydiaceae</taxon>
        <taxon>Chlamydia/Chlamydophila group</taxon>
        <taxon>Chlamydia</taxon>
    </lineage>
</organism>
<dbReference type="EMBL" id="AP006861">
    <property type="protein sequence ID" value="BAE81237.1"/>
    <property type="molecule type" value="Genomic_DNA"/>
</dbReference>
<dbReference type="RefSeq" id="WP_011458017.1">
    <property type="nucleotide sequence ID" value="NC_007899.1"/>
</dbReference>
<dbReference type="SMR" id="Q254Q1"/>
<dbReference type="STRING" id="264202.CF0465"/>
<dbReference type="KEGG" id="cfe:CF0465"/>
<dbReference type="eggNOG" id="COG1438">
    <property type="taxonomic scope" value="Bacteria"/>
</dbReference>
<dbReference type="HOGENOM" id="CLU_097103_2_0_0"/>
<dbReference type="OrthoDB" id="9807089at2"/>
<dbReference type="UniPathway" id="UPA00068"/>
<dbReference type="Proteomes" id="UP000001260">
    <property type="component" value="Chromosome"/>
</dbReference>
<dbReference type="GO" id="GO:0005737">
    <property type="term" value="C:cytoplasm"/>
    <property type="evidence" value="ECO:0007669"/>
    <property type="project" value="UniProtKB-SubCell"/>
</dbReference>
<dbReference type="GO" id="GO:0034618">
    <property type="term" value="F:arginine binding"/>
    <property type="evidence" value="ECO:0007669"/>
    <property type="project" value="InterPro"/>
</dbReference>
<dbReference type="GO" id="GO:0003677">
    <property type="term" value="F:DNA binding"/>
    <property type="evidence" value="ECO:0007669"/>
    <property type="project" value="UniProtKB-KW"/>
</dbReference>
<dbReference type="GO" id="GO:0003700">
    <property type="term" value="F:DNA-binding transcription factor activity"/>
    <property type="evidence" value="ECO:0007669"/>
    <property type="project" value="UniProtKB-UniRule"/>
</dbReference>
<dbReference type="GO" id="GO:0006526">
    <property type="term" value="P:L-arginine biosynthetic process"/>
    <property type="evidence" value="ECO:0007669"/>
    <property type="project" value="UniProtKB-UniPathway"/>
</dbReference>
<dbReference type="GO" id="GO:0051259">
    <property type="term" value="P:protein complex oligomerization"/>
    <property type="evidence" value="ECO:0007669"/>
    <property type="project" value="InterPro"/>
</dbReference>
<dbReference type="GO" id="GO:1900079">
    <property type="term" value="P:regulation of arginine biosynthetic process"/>
    <property type="evidence" value="ECO:0007669"/>
    <property type="project" value="UniProtKB-UniRule"/>
</dbReference>
<dbReference type="Gene3D" id="3.30.1360.40">
    <property type="match status" value="1"/>
</dbReference>
<dbReference type="Gene3D" id="1.10.10.10">
    <property type="entry name" value="Winged helix-like DNA-binding domain superfamily/Winged helix DNA-binding domain"/>
    <property type="match status" value="1"/>
</dbReference>
<dbReference type="HAMAP" id="MF_00173">
    <property type="entry name" value="Arg_repressor"/>
    <property type="match status" value="1"/>
</dbReference>
<dbReference type="InterPro" id="IPR001669">
    <property type="entry name" value="Arg_repress"/>
</dbReference>
<dbReference type="InterPro" id="IPR020899">
    <property type="entry name" value="Arg_repress_C"/>
</dbReference>
<dbReference type="InterPro" id="IPR036251">
    <property type="entry name" value="Arg_repress_C_sf"/>
</dbReference>
<dbReference type="InterPro" id="IPR020900">
    <property type="entry name" value="Arg_repress_DNA-bd"/>
</dbReference>
<dbReference type="InterPro" id="IPR036388">
    <property type="entry name" value="WH-like_DNA-bd_sf"/>
</dbReference>
<dbReference type="InterPro" id="IPR036390">
    <property type="entry name" value="WH_DNA-bd_sf"/>
</dbReference>
<dbReference type="NCBIfam" id="TIGR01529">
    <property type="entry name" value="argR_whole"/>
    <property type="match status" value="1"/>
</dbReference>
<dbReference type="PANTHER" id="PTHR34471">
    <property type="entry name" value="ARGININE REPRESSOR"/>
    <property type="match status" value="1"/>
</dbReference>
<dbReference type="PANTHER" id="PTHR34471:SF1">
    <property type="entry name" value="ARGININE REPRESSOR"/>
    <property type="match status" value="1"/>
</dbReference>
<dbReference type="Pfam" id="PF01316">
    <property type="entry name" value="Arg_repressor"/>
    <property type="match status" value="1"/>
</dbReference>
<dbReference type="Pfam" id="PF02863">
    <property type="entry name" value="Arg_repressor_C"/>
    <property type="match status" value="1"/>
</dbReference>
<dbReference type="PRINTS" id="PR01467">
    <property type="entry name" value="ARGREPRESSOR"/>
</dbReference>
<dbReference type="SUPFAM" id="SSF55252">
    <property type="entry name" value="C-terminal domain of arginine repressor"/>
    <property type="match status" value="1"/>
</dbReference>
<dbReference type="SUPFAM" id="SSF46785">
    <property type="entry name" value="Winged helix' DNA-binding domain"/>
    <property type="match status" value="1"/>
</dbReference>
<sequence>MKKNVAVDEALKEILNKEGASTQEEICEKLSSLGIAMTQSSVSRWLRKVHAIKIPGEKGARYSLPTSIDESSVKGLVFSVRYNSSLIVIRTAPGSASWIASLIDNKFSESILGTLAGDDTIFVTPIAESTISFIAKDIENFLLVFSD</sequence>
<proteinExistence type="inferred from homology"/>
<protein>
    <recommendedName>
        <fullName evidence="1">Arginine repressor</fullName>
    </recommendedName>
</protein>
<name>ARGR_CHLFF</name>
<keyword id="KW-0028">Amino-acid biosynthesis</keyword>
<keyword id="KW-0055">Arginine biosynthesis</keyword>
<keyword id="KW-0963">Cytoplasm</keyword>
<keyword id="KW-0238">DNA-binding</keyword>
<keyword id="KW-0678">Repressor</keyword>
<keyword id="KW-0804">Transcription</keyword>
<keyword id="KW-0805">Transcription regulation</keyword>
<feature type="chain" id="PRO_1000023552" description="Arginine repressor">
    <location>
        <begin position="1"/>
        <end position="147"/>
    </location>
</feature>
<gene>
    <name evidence="1" type="primary">argR</name>
    <name type="ordered locus">CF0465</name>
</gene>
<reference key="1">
    <citation type="journal article" date="2006" name="DNA Res.">
        <title>Genome sequence of the cat pathogen, Chlamydophila felis.</title>
        <authorList>
            <person name="Azuma Y."/>
            <person name="Hirakawa H."/>
            <person name="Yamashita A."/>
            <person name="Cai Y."/>
            <person name="Rahman M.A."/>
            <person name="Suzuki H."/>
            <person name="Mitaku S."/>
            <person name="Toh H."/>
            <person name="Goto S."/>
            <person name="Murakami T."/>
            <person name="Sugi K."/>
            <person name="Hayashi H."/>
            <person name="Fukushi H."/>
            <person name="Hattori M."/>
            <person name="Kuhara S."/>
            <person name="Shirai M."/>
        </authorList>
    </citation>
    <scope>NUCLEOTIDE SEQUENCE [LARGE SCALE GENOMIC DNA]</scope>
    <source>
        <strain>Fe/C-56</strain>
    </source>
</reference>